<reference key="1">
    <citation type="journal article" date="2009" name="Stand. Genomic Sci.">
        <title>Complete genome sequence of Methanocorpusculum labreanum type strain Z.</title>
        <authorList>
            <person name="Anderson I.J."/>
            <person name="Sieprawska-Lupa M."/>
            <person name="Goltsman E."/>
            <person name="Lapidus A."/>
            <person name="Copeland A."/>
            <person name="Glavina Del Rio T."/>
            <person name="Tice H."/>
            <person name="Dalin E."/>
            <person name="Barry K."/>
            <person name="Pitluck S."/>
            <person name="Hauser L."/>
            <person name="Land M."/>
            <person name="Lucas S."/>
            <person name="Richardson P."/>
            <person name="Whitman W.B."/>
            <person name="Kyrpides N.C."/>
        </authorList>
    </citation>
    <scope>NUCLEOTIDE SEQUENCE [LARGE SCALE GENOMIC DNA]</scope>
    <source>
        <strain>ATCC 43576 / DSM 4855 / Z</strain>
    </source>
</reference>
<dbReference type="EC" id="4.2.1.11" evidence="1"/>
<dbReference type="EMBL" id="CP000559">
    <property type="protein sequence ID" value="ABN07407.1"/>
    <property type="molecule type" value="Genomic_DNA"/>
</dbReference>
<dbReference type="RefSeq" id="WP_011833610.1">
    <property type="nucleotide sequence ID" value="NC_008942.1"/>
</dbReference>
<dbReference type="SMR" id="A2SSV1"/>
<dbReference type="STRING" id="410358.Mlab_1238"/>
<dbReference type="GeneID" id="4795183"/>
<dbReference type="KEGG" id="mla:Mlab_1238"/>
<dbReference type="eggNOG" id="arCOG01169">
    <property type="taxonomic scope" value="Archaea"/>
</dbReference>
<dbReference type="HOGENOM" id="CLU_031223_0_1_2"/>
<dbReference type="OrthoDB" id="8680at2157"/>
<dbReference type="UniPathway" id="UPA00109">
    <property type="reaction ID" value="UER00187"/>
</dbReference>
<dbReference type="Proteomes" id="UP000000365">
    <property type="component" value="Chromosome"/>
</dbReference>
<dbReference type="GO" id="GO:0009986">
    <property type="term" value="C:cell surface"/>
    <property type="evidence" value="ECO:0007669"/>
    <property type="project" value="UniProtKB-SubCell"/>
</dbReference>
<dbReference type="GO" id="GO:0005576">
    <property type="term" value="C:extracellular region"/>
    <property type="evidence" value="ECO:0007669"/>
    <property type="project" value="UniProtKB-SubCell"/>
</dbReference>
<dbReference type="GO" id="GO:0000015">
    <property type="term" value="C:phosphopyruvate hydratase complex"/>
    <property type="evidence" value="ECO:0007669"/>
    <property type="project" value="InterPro"/>
</dbReference>
<dbReference type="GO" id="GO:0000287">
    <property type="term" value="F:magnesium ion binding"/>
    <property type="evidence" value="ECO:0007669"/>
    <property type="project" value="UniProtKB-UniRule"/>
</dbReference>
<dbReference type="GO" id="GO:0004634">
    <property type="term" value="F:phosphopyruvate hydratase activity"/>
    <property type="evidence" value="ECO:0007669"/>
    <property type="project" value="UniProtKB-UniRule"/>
</dbReference>
<dbReference type="GO" id="GO:0006096">
    <property type="term" value="P:glycolytic process"/>
    <property type="evidence" value="ECO:0007669"/>
    <property type="project" value="UniProtKB-UniRule"/>
</dbReference>
<dbReference type="CDD" id="cd03313">
    <property type="entry name" value="enolase"/>
    <property type="match status" value="1"/>
</dbReference>
<dbReference type="Gene3D" id="3.20.20.120">
    <property type="entry name" value="Enolase-like C-terminal domain"/>
    <property type="match status" value="1"/>
</dbReference>
<dbReference type="Gene3D" id="3.30.390.10">
    <property type="entry name" value="Enolase-like, N-terminal domain"/>
    <property type="match status" value="1"/>
</dbReference>
<dbReference type="HAMAP" id="MF_00318">
    <property type="entry name" value="Enolase"/>
    <property type="match status" value="1"/>
</dbReference>
<dbReference type="InterPro" id="IPR000941">
    <property type="entry name" value="Enolase"/>
</dbReference>
<dbReference type="InterPro" id="IPR036849">
    <property type="entry name" value="Enolase-like_C_sf"/>
</dbReference>
<dbReference type="InterPro" id="IPR029017">
    <property type="entry name" value="Enolase-like_N"/>
</dbReference>
<dbReference type="InterPro" id="IPR020810">
    <property type="entry name" value="Enolase_C"/>
</dbReference>
<dbReference type="InterPro" id="IPR020809">
    <property type="entry name" value="Enolase_CS"/>
</dbReference>
<dbReference type="InterPro" id="IPR020811">
    <property type="entry name" value="Enolase_N"/>
</dbReference>
<dbReference type="NCBIfam" id="TIGR01060">
    <property type="entry name" value="eno"/>
    <property type="match status" value="1"/>
</dbReference>
<dbReference type="PANTHER" id="PTHR11902">
    <property type="entry name" value="ENOLASE"/>
    <property type="match status" value="1"/>
</dbReference>
<dbReference type="PANTHER" id="PTHR11902:SF1">
    <property type="entry name" value="ENOLASE"/>
    <property type="match status" value="1"/>
</dbReference>
<dbReference type="Pfam" id="PF00113">
    <property type="entry name" value="Enolase_C"/>
    <property type="match status" value="1"/>
</dbReference>
<dbReference type="Pfam" id="PF03952">
    <property type="entry name" value="Enolase_N"/>
    <property type="match status" value="1"/>
</dbReference>
<dbReference type="PIRSF" id="PIRSF001400">
    <property type="entry name" value="Enolase"/>
    <property type="match status" value="1"/>
</dbReference>
<dbReference type="PRINTS" id="PR00148">
    <property type="entry name" value="ENOLASE"/>
</dbReference>
<dbReference type="SFLD" id="SFLDS00001">
    <property type="entry name" value="Enolase"/>
    <property type="match status" value="1"/>
</dbReference>
<dbReference type="SFLD" id="SFLDF00002">
    <property type="entry name" value="enolase"/>
    <property type="match status" value="1"/>
</dbReference>
<dbReference type="SMART" id="SM01192">
    <property type="entry name" value="Enolase_C"/>
    <property type="match status" value="1"/>
</dbReference>
<dbReference type="SMART" id="SM01193">
    <property type="entry name" value="Enolase_N"/>
    <property type="match status" value="1"/>
</dbReference>
<dbReference type="SUPFAM" id="SSF51604">
    <property type="entry name" value="Enolase C-terminal domain-like"/>
    <property type="match status" value="1"/>
</dbReference>
<dbReference type="SUPFAM" id="SSF54826">
    <property type="entry name" value="Enolase N-terminal domain-like"/>
    <property type="match status" value="1"/>
</dbReference>
<dbReference type="PROSITE" id="PS00164">
    <property type="entry name" value="ENOLASE"/>
    <property type="match status" value="1"/>
</dbReference>
<keyword id="KW-0963">Cytoplasm</keyword>
<keyword id="KW-0324">Glycolysis</keyword>
<keyword id="KW-0456">Lyase</keyword>
<keyword id="KW-0460">Magnesium</keyword>
<keyword id="KW-0479">Metal-binding</keyword>
<keyword id="KW-1185">Reference proteome</keyword>
<keyword id="KW-0964">Secreted</keyword>
<evidence type="ECO:0000255" key="1">
    <source>
        <dbReference type="HAMAP-Rule" id="MF_00318"/>
    </source>
</evidence>
<sequence length="399" mass="42847">MTEISDILLRTILDSRGNPTVEAEISTISGGFGRACAPSGASTGIYEAKVRPCDEAVADAYINLIPKLIELDSADQRGFDDTLHEVDGTSDLSGIGANIAVALSLANAKAAASTLNMELYQYLGGAFISQTPLPLGNVIGGGAHAVDATDIQEFLIVPTGASTAAEAVFTNALVHKRIKEILIARGKGCGKGDEGGWAPHIADLEAFEIVNEATTKVFDETGIEVRMGLDVAASEMWDAASGRYVYKNAKRTTEEQIAYIADLTEKYNLIYVEDPIQEEDFEGFARITEEVSGRDTLICGDDLFVTNASRLEEGIRNDACNCVLIKPNQIGTLTDTFETISLAHDYGYETVMSHRSGETTDNTIAHLATAFGCCFMKSGVVGGERIAKLNELIRIEEHF</sequence>
<accession>A2SSV1</accession>
<feature type="chain" id="PRO_1000019219" description="Enolase">
    <location>
        <begin position="1"/>
        <end position="399"/>
    </location>
</feature>
<feature type="active site" description="Proton donor" evidence="1">
    <location>
        <position position="194"/>
    </location>
</feature>
<feature type="active site" description="Proton acceptor" evidence="1">
    <location>
        <position position="326"/>
    </location>
</feature>
<feature type="binding site" evidence="1">
    <location>
        <position position="152"/>
    </location>
    <ligand>
        <name>(2R)-2-phosphoglycerate</name>
        <dbReference type="ChEBI" id="CHEBI:58289"/>
    </ligand>
</feature>
<feature type="binding site" evidence="1">
    <location>
        <position position="230"/>
    </location>
    <ligand>
        <name>Mg(2+)</name>
        <dbReference type="ChEBI" id="CHEBI:18420"/>
    </ligand>
</feature>
<feature type="binding site" evidence="1">
    <location>
        <position position="273"/>
    </location>
    <ligand>
        <name>Mg(2+)</name>
        <dbReference type="ChEBI" id="CHEBI:18420"/>
    </ligand>
</feature>
<feature type="binding site" evidence="1">
    <location>
        <position position="301"/>
    </location>
    <ligand>
        <name>Mg(2+)</name>
        <dbReference type="ChEBI" id="CHEBI:18420"/>
    </ligand>
</feature>
<feature type="binding site" evidence="1">
    <location>
        <position position="326"/>
    </location>
    <ligand>
        <name>(2R)-2-phosphoglycerate</name>
        <dbReference type="ChEBI" id="CHEBI:58289"/>
    </ligand>
</feature>
<feature type="binding site" evidence="1">
    <location>
        <position position="355"/>
    </location>
    <ligand>
        <name>(2R)-2-phosphoglycerate</name>
        <dbReference type="ChEBI" id="CHEBI:58289"/>
    </ligand>
</feature>
<feature type="binding site" evidence="1">
    <location>
        <position position="356"/>
    </location>
    <ligand>
        <name>(2R)-2-phosphoglycerate</name>
        <dbReference type="ChEBI" id="CHEBI:58289"/>
    </ligand>
</feature>
<feature type="binding site" evidence="1">
    <location>
        <position position="377"/>
    </location>
    <ligand>
        <name>(2R)-2-phosphoglycerate</name>
        <dbReference type="ChEBI" id="CHEBI:58289"/>
    </ligand>
</feature>
<proteinExistence type="inferred from homology"/>
<name>ENO_METLZ</name>
<comment type="function">
    <text evidence="1">Catalyzes the reversible conversion of 2-phosphoglycerate (2-PG) into phosphoenolpyruvate (PEP). It is essential for the degradation of carbohydrates via glycolysis.</text>
</comment>
<comment type="catalytic activity">
    <reaction evidence="1">
        <text>(2R)-2-phosphoglycerate = phosphoenolpyruvate + H2O</text>
        <dbReference type="Rhea" id="RHEA:10164"/>
        <dbReference type="ChEBI" id="CHEBI:15377"/>
        <dbReference type="ChEBI" id="CHEBI:58289"/>
        <dbReference type="ChEBI" id="CHEBI:58702"/>
        <dbReference type="EC" id="4.2.1.11"/>
    </reaction>
</comment>
<comment type="cofactor">
    <cofactor evidence="1">
        <name>Mg(2+)</name>
        <dbReference type="ChEBI" id="CHEBI:18420"/>
    </cofactor>
    <text evidence="1">Binds a second Mg(2+) ion via substrate during catalysis.</text>
</comment>
<comment type="pathway">
    <text evidence="1">Carbohydrate degradation; glycolysis; pyruvate from D-glyceraldehyde 3-phosphate: step 4/5.</text>
</comment>
<comment type="subcellular location">
    <subcellularLocation>
        <location evidence="1">Cytoplasm</location>
    </subcellularLocation>
    <subcellularLocation>
        <location evidence="1">Secreted</location>
    </subcellularLocation>
    <subcellularLocation>
        <location evidence="1">Cell surface</location>
    </subcellularLocation>
    <text evidence="1">Fractions of enolase are present in both the cytoplasm and on the cell surface.</text>
</comment>
<comment type="similarity">
    <text evidence="1">Belongs to the enolase family.</text>
</comment>
<protein>
    <recommendedName>
        <fullName evidence="1">Enolase</fullName>
        <ecNumber evidence="1">4.2.1.11</ecNumber>
    </recommendedName>
    <alternativeName>
        <fullName evidence="1">2-phospho-D-glycerate hydro-lyase</fullName>
    </alternativeName>
    <alternativeName>
        <fullName evidence="1">2-phosphoglycerate dehydratase</fullName>
    </alternativeName>
</protein>
<gene>
    <name evidence="1" type="primary">eno</name>
    <name type="ordered locus">Mlab_1238</name>
</gene>
<organism>
    <name type="scientific">Methanocorpusculum labreanum (strain ATCC 43576 / DSM 4855 / Z)</name>
    <dbReference type="NCBI Taxonomy" id="410358"/>
    <lineage>
        <taxon>Archaea</taxon>
        <taxon>Methanobacteriati</taxon>
        <taxon>Methanobacteriota</taxon>
        <taxon>Stenosarchaea group</taxon>
        <taxon>Methanomicrobia</taxon>
        <taxon>Methanomicrobiales</taxon>
        <taxon>Methanocorpusculaceae</taxon>
        <taxon>Methanocorpusculum</taxon>
    </lineage>
</organism>